<proteinExistence type="inferred from homology"/>
<keyword id="KW-0687">Ribonucleoprotein</keyword>
<keyword id="KW-0689">Ribosomal protein</keyword>
<keyword id="KW-0694">RNA-binding</keyword>
<keyword id="KW-0699">rRNA-binding</keyword>
<sequence length="92" mass="10572">MGRSLKKGPFVDEHLMKKVEAQTNAERKSVIKTWSRRSTIFPNFVGLTIAVYDGRKHVPVYVQEDMVGHKLGEFAPTRTYRGHAADDKKTRR</sequence>
<organism>
    <name type="scientific">Lactococcus lactis subsp. cremoris (strain SK11)</name>
    <dbReference type="NCBI Taxonomy" id="272622"/>
    <lineage>
        <taxon>Bacteria</taxon>
        <taxon>Bacillati</taxon>
        <taxon>Bacillota</taxon>
        <taxon>Bacilli</taxon>
        <taxon>Lactobacillales</taxon>
        <taxon>Streptococcaceae</taxon>
        <taxon>Lactococcus</taxon>
        <taxon>Lactococcus cremoris subsp. cremoris</taxon>
    </lineage>
</organism>
<name>RS19_LACLS</name>
<accession>Q02W28</accession>
<comment type="function">
    <text evidence="1">Protein S19 forms a complex with S13 that binds strongly to the 16S ribosomal RNA.</text>
</comment>
<comment type="similarity">
    <text evidence="1">Belongs to the universal ribosomal protein uS19 family.</text>
</comment>
<evidence type="ECO:0000255" key="1">
    <source>
        <dbReference type="HAMAP-Rule" id="MF_00531"/>
    </source>
</evidence>
<evidence type="ECO:0000305" key="2"/>
<gene>
    <name evidence="1" type="primary">rpsS</name>
    <name type="ordered locus">LACR_2398</name>
</gene>
<protein>
    <recommendedName>
        <fullName evidence="1">Small ribosomal subunit protein uS19</fullName>
    </recommendedName>
    <alternativeName>
        <fullName evidence="2">30S ribosomal protein S19</fullName>
    </alternativeName>
</protein>
<dbReference type="EMBL" id="CP000425">
    <property type="protein sequence ID" value="ABJ73844.1"/>
    <property type="molecule type" value="Genomic_DNA"/>
</dbReference>
<dbReference type="RefSeq" id="WP_011677159.1">
    <property type="nucleotide sequence ID" value="NC_008527.1"/>
</dbReference>
<dbReference type="SMR" id="Q02W28"/>
<dbReference type="GeneID" id="61110423"/>
<dbReference type="KEGG" id="llc:LACR_2398"/>
<dbReference type="HOGENOM" id="CLU_144911_0_1_9"/>
<dbReference type="Proteomes" id="UP000000240">
    <property type="component" value="Chromosome"/>
</dbReference>
<dbReference type="GO" id="GO:0005737">
    <property type="term" value="C:cytoplasm"/>
    <property type="evidence" value="ECO:0007669"/>
    <property type="project" value="UniProtKB-ARBA"/>
</dbReference>
<dbReference type="GO" id="GO:0015935">
    <property type="term" value="C:small ribosomal subunit"/>
    <property type="evidence" value="ECO:0007669"/>
    <property type="project" value="InterPro"/>
</dbReference>
<dbReference type="GO" id="GO:0019843">
    <property type="term" value="F:rRNA binding"/>
    <property type="evidence" value="ECO:0007669"/>
    <property type="project" value="UniProtKB-UniRule"/>
</dbReference>
<dbReference type="GO" id="GO:0003735">
    <property type="term" value="F:structural constituent of ribosome"/>
    <property type="evidence" value="ECO:0007669"/>
    <property type="project" value="InterPro"/>
</dbReference>
<dbReference type="GO" id="GO:0000028">
    <property type="term" value="P:ribosomal small subunit assembly"/>
    <property type="evidence" value="ECO:0007669"/>
    <property type="project" value="TreeGrafter"/>
</dbReference>
<dbReference type="GO" id="GO:0006412">
    <property type="term" value="P:translation"/>
    <property type="evidence" value="ECO:0007669"/>
    <property type="project" value="UniProtKB-UniRule"/>
</dbReference>
<dbReference type="FunFam" id="3.30.860.10:FF:000001">
    <property type="entry name" value="30S ribosomal protein S19"/>
    <property type="match status" value="1"/>
</dbReference>
<dbReference type="Gene3D" id="3.30.860.10">
    <property type="entry name" value="30s Ribosomal Protein S19, Chain A"/>
    <property type="match status" value="1"/>
</dbReference>
<dbReference type="HAMAP" id="MF_00531">
    <property type="entry name" value="Ribosomal_uS19"/>
    <property type="match status" value="1"/>
</dbReference>
<dbReference type="InterPro" id="IPR002222">
    <property type="entry name" value="Ribosomal_uS19"/>
</dbReference>
<dbReference type="InterPro" id="IPR005732">
    <property type="entry name" value="Ribosomal_uS19_bac-type"/>
</dbReference>
<dbReference type="InterPro" id="IPR020934">
    <property type="entry name" value="Ribosomal_uS19_CS"/>
</dbReference>
<dbReference type="InterPro" id="IPR023575">
    <property type="entry name" value="Ribosomal_uS19_SF"/>
</dbReference>
<dbReference type="NCBIfam" id="TIGR01050">
    <property type="entry name" value="rpsS_bact"/>
    <property type="match status" value="1"/>
</dbReference>
<dbReference type="PANTHER" id="PTHR11880">
    <property type="entry name" value="RIBOSOMAL PROTEIN S19P FAMILY MEMBER"/>
    <property type="match status" value="1"/>
</dbReference>
<dbReference type="PANTHER" id="PTHR11880:SF8">
    <property type="entry name" value="SMALL RIBOSOMAL SUBUNIT PROTEIN US19M"/>
    <property type="match status" value="1"/>
</dbReference>
<dbReference type="Pfam" id="PF00203">
    <property type="entry name" value="Ribosomal_S19"/>
    <property type="match status" value="1"/>
</dbReference>
<dbReference type="PIRSF" id="PIRSF002144">
    <property type="entry name" value="Ribosomal_S19"/>
    <property type="match status" value="1"/>
</dbReference>
<dbReference type="PRINTS" id="PR00975">
    <property type="entry name" value="RIBOSOMALS19"/>
</dbReference>
<dbReference type="SUPFAM" id="SSF54570">
    <property type="entry name" value="Ribosomal protein S19"/>
    <property type="match status" value="1"/>
</dbReference>
<dbReference type="PROSITE" id="PS00323">
    <property type="entry name" value="RIBOSOMAL_S19"/>
    <property type="match status" value="1"/>
</dbReference>
<reference key="1">
    <citation type="journal article" date="2006" name="Proc. Natl. Acad. Sci. U.S.A.">
        <title>Comparative genomics of the lactic acid bacteria.</title>
        <authorList>
            <person name="Makarova K.S."/>
            <person name="Slesarev A."/>
            <person name="Wolf Y.I."/>
            <person name="Sorokin A."/>
            <person name="Mirkin B."/>
            <person name="Koonin E.V."/>
            <person name="Pavlov A."/>
            <person name="Pavlova N."/>
            <person name="Karamychev V."/>
            <person name="Polouchine N."/>
            <person name="Shakhova V."/>
            <person name="Grigoriev I."/>
            <person name="Lou Y."/>
            <person name="Rohksar D."/>
            <person name="Lucas S."/>
            <person name="Huang K."/>
            <person name="Goodstein D.M."/>
            <person name="Hawkins T."/>
            <person name="Plengvidhya V."/>
            <person name="Welker D."/>
            <person name="Hughes J."/>
            <person name="Goh Y."/>
            <person name="Benson A."/>
            <person name="Baldwin K."/>
            <person name="Lee J.-H."/>
            <person name="Diaz-Muniz I."/>
            <person name="Dosti B."/>
            <person name="Smeianov V."/>
            <person name="Wechter W."/>
            <person name="Barabote R."/>
            <person name="Lorca G."/>
            <person name="Altermann E."/>
            <person name="Barrangou R."/>
            <person name="Ganesan B."/>
            <person name="Xie Y."/>
            <person name="Rawsthorne H."/>
            <person name="Tamir D."/>
            <person name="Parker C."/>
            <person name="Breidt F."/>
            <person name="Broadbent J.R."/>
            <person name="Hutkins R."/>
            <person name="O'Sullivan D."/>
            <person name="Steele J."/>
            <person name="Unlu G."/>
            <person name="Saier M.H. Jr."/>
            <person name="Klaenhammer T."/>
            <person name="Richardson P."/>
            <person name="Kozyavkin S."/>
            <person name="Weimer B.C."/>
            <person name="Mills D.A."/>
        </authorList>
    </citation>
    <scope>NUCLEOTIDE SEQUENCE [LARGE SCALE GENOMIC DNA]</scope>
    <source>
        <strain>SK11</strain>
    </source>
</reference>
<feature type="chain" id="PRO_1000051067" description="Small ribosomal subunit protein uS19">
    <location>
        <begin position="1"/>
        <end position="92"/>
    </location>
</feature>